<feature type="chain" id="PRO_0000101802" description="Disintegrin EC6 subunit beta" evidence="3">
    <location>
        <begin position="1"/>
        <end position="69"/>
    </location>
</feature>
<feature type="domain" description="Disintegrin" evidence="2">
    <location>
        <begin position="1"/>
        <end position="65"/>
    </location>
</feature>
<feature type="short sequence motif" description="Cell attachment site">
    <location>
        <begin position="42"/>
        <end position="44"/>
    </location>
</feature>
<feature type="disulfide bond" evidence="1">
    <location>
        <begin position="6"/>
        <end position="29"/>
    </location>
</feature>
<feature type="disulfide bond" description="Interchain (with C-59 in subunit alpha)" evidence="1">
    <location>
        <position position="7"/>
    </location>
</feature>
<feature type="disulfide bond" description="Interchain (with C-54 in subunit alpha)" evidence="1">
    <location>
        <position position="12"/>
    </location>
</feature>
<feature type="disulfide bond" evidence="1">
    <location>
        <begin position="20"/>
        <end position="26"/>
    </location>
</feature>
<feature type="disulfide bond" evidence="1">
    <location>
        <begin position="25"/>
        <end position="50"/>
    </location>
</feature>
<feature type="disulfide bond" evidence="1 2">
    <location>
        <begin position="38"/>
        <end position="57"/>
    </location>
</feature>
<protein>
    <recommendedName>
        <fullName evidence="6">Disintegrin EC6 subunit beta</fullName>
        <shortName evidence="4">EC6B</shortName>
    </recommendedName>
</protein>
<accession>P82466</accession>
<dbReference type="SMR" id="P82466"/>
<dbReference type="GO" id="GO:0005576">
    <property type="term" value="C:extracellular region"/>
    <property type="evidence" value="ECO:0007669"/>
    <property type="project" value="UniProtKB-SubCell"/>
</dbReference>
<dbReference type="GO" id="GO:0090729">
    <property type="term" value="F:toxin activity"/>
    <property type="evidence" value="ECO:0007669"/>
    <property type="project" value="UniProtKB-KW"/>
</dbReference>
<dbReference type="Gene3D" id="4.10.70.10">
    <property type="entry name" value="Disintegrin domain"/>
    <property type="match status" value="1"/>
</dbReference>
<dbReference type="InterPro" id="IPR018358">
    <property type="entry name" value="Disintegrin_CS"/>
</dbReference>
<dbReference type="InterPro" id="IPR001762">
    <property type="entry name" value="Disintegrin_dom"/>
</dbReference>
<dbReference type="InterPro" id="IPR036436">
    <property type="entry name" value="Disintegrin_dom_sf"/>
</dbReference>
<dbReference type="Pfam" id="PF00200">
    <property type="entry name" value="Disintegrin"/>
    <property type="match status" value="1"/>
</dbReference>
<dbReference type="PRINTS" id="PR00289">
    <property type="entry name" value="DISINTEGRIN"/>
</dbReference>
<dbReference type="SMART" id="SM00050">
    <property type="entry name" value="DISIN"/>
    <property type="match status" value="1"/>
</dbReference>
<dbReference type="SUPFAM" id="SSF57552">
    <property type="entry name" value="Blood coagulation inhibitor (disintegrin)"/>
    <property type="match status" value="1"/>
</dbReference>
<dbReference type="PROSITE" id="PS00427">
    <property type="entry name" value="DISINTEGRIN_1"/>
    <property type="match status" value="1"/>
</dbReference>
<dbReference type="PROSITE" id="PS50214">
    <property type="entry name" value="DISINTEGRIN_2"/>
    <property type="match status" value="1"/>
</dbReference>
<sequence>NSVHPCCDPVTCKPKRGKHCASGPCCENCYIVGVGTVCNPARGDWNDDNCTGVSSDCPPNPWNGKPSDN</sequence>
<evidence type="ECO:0000250" key="1">
    <source>
        <dbReference type="UniProtKB" id="Q805F6"/>
    </source>
</evidence>
<evidence type="ECO:0000255" key="2">
    <source>
        <dbReference type="PROSITE-ProRule" id="PRU00068"/>
    </source>
</evidence>
<evidence type="ECO:0000269" key="3">
    <source>
    </source>
</evidence>
<evidence type="ECO:0000303" key="4">
    <source>
    </source>
</evidence>
<evidence type="ECO:0000305" key="5"/>
<evidence type="ECO:0000305" key="6">
    <source>
    </source>
</evidence>
<keyword id="KW-1217">Cell adhesion impairing toxin</keyword>
<keyword id="KW-0903">Direct protein sequencing</keyword>
<keyword id="KW-1015">Disulfide bond</keyword>
<keyword id="KW-0964">Secreted</keyword>
<keyword id="KW-0800">Toxin</keyword>
<comment type="function">
    <text evidence="3">Potently inhibits adhesion of alpha-4/beta-1 (ITGA4/ITGB1) and alpha-9/beta-1 (ITGA9/ITGB1) integrins to VCAM1, and adhesion of alpha-5/beta-1 (ITGA5/ITGB1) integrin to fibronectin. Has a much less effect on alpha-IIb/beta-3 (ITGA2B/ITGB3) integrin. Also potently inhibits neutrophil migration across TNF-alpha-activated human umbilical endothelial cells.</text>
</comment>
<comment type="subunit">
    <text>Heterodimer with subunit alpha; disulfide-linked.</text>
</comment>
<comment type="subcellular location">
    <subcellularLocation>
        <location evidence="3">Secreted</location>
    </subcellularLocation>
</comment>
<comment type="tissue specificity">
    <text evidence="6">Expressed by the venom gland.</text>
</comment>
<comment type="miscellaneous">
    <text>The disintegrin belongs to the dimeric disintegrin subfamily.</text>
</comment>
<comment type="similarity">
    <text evidence="5">Belongs to the venom metalloproteinase (M12B) family. P-II subfamily. P-IIe sub-subfamily.</text>
</comment>
<organism>
    <name type="scientific">Echis carinatus sochureki</name>
    <name type="common">Saw-scaled viper</name>
    <dbReference type="NCBI Taxonomy" id="124223"/>
    <lineage>
        <taxon>Eukaryota</taxon>
        <taxon>Metazoa</taxon>
        <taxon>Chordata</taxon>
        <taxon>Craniata</taxon>
        <taxon>Vertebrata</taxon>
        <taxon>Euteleostomi</taxon>
        <taxon>Lepidosauria</taxon>
        <taxon>Squamata</taxon>
        <taxon>Bifurcata</taxon>
        <taxon>Unidentata</taxon>
        <taxon>Episquamata</taxon>
        <taxon>Toxicofera</taxon>
        <taxon>Serpentes</taxon>
        <taxon>Colubroidea</taxon>
        <taxon>Viperidae</taxon>
        <taxon>Viperinae</taxon>
        <taxon>Echis</taxon>
    </lineage>
</organism>
<reference key="1">
    <citation type="journal article" date="2000" name="J. Biol. Chem.">
        <title>Inhibitory effects of MLDG-containing heterodimeric disintegrins reveal distinct structural requirements for interaction of the integrin alpha 9beta 1 with VCAM-1, tenascin-C, and osteopontin.</title>
        <authorList>
            <person name="Marcinkiewicz C."/>
            <person name="Taooka Y."/>
            <person name="Yokosaki Y."/>
            <person name="Calvete J.J."/>
            <person name="Marcinkiewicz M.M."/>
            <person name="Lobb R.R."/>
            <person name="Niewiarowski S."/>
            <person name="Sheppard D."/>
        </authorList>
    </citation>
    <scope>PROTEIN SEQUENCE</scope>
    <scope>FUNCTION</scope>
    <scope>IDENTIFICATION BY MASS SPECTROMETRY</scope>
    <scope>SUBCELLULAR LOCATION</scope>
    <source>
        <tissue>Venom</tissue>
    </source>
</reference>
<proteinExistence type="evidence at protein level"/>
<name>VM26B_ECHCS</name>